<sequence length="121" mass="12703">MAKKKKLSFTNGIAYIHATKNNTIITLADEQGSVLSWASSGSIGYKGTKKKTPYSAGIAAEAAAKAVIDMGLKSVEVHVNGTGASRDTAIRSLQAAGLEVTKIKDVTPIPHNGCRPPKKPR</sequence>
<keyword id="KW-1185">Reference proteome</keyword>
<keyword id="KW-0687">Ribonucleoprotein</keyword>
<keyword id="KW-0689">Ribosomal protein</keyword>
<keyword id="KW-0694">RNA-binding</keyword>
<keyword id="KW-0699">rRNA-binding</keyword>
<proteinExistence type="inferred from homology"/>
<protein>
    <recommendedName>
        <fullName evidence="1">Small ribosomal subunit protein uS11</fullName>
    </recommendedName>
    <alternativeName>
        <fullName evidence="2">30S ribosomal protein S11</fullName>
    </alternativeName>
</protein>
<dbReference type="EMBL" id="AF222894">
    <property type="protein sequence ID" value="AAF30665.1"/>
    <property type="molecule type" value="Genomic_DNA"/>
</dbReference>
<dbReference type="RefSeq" id="WP_004026006.1">
    <property type="nucleotide sequence ID" value="NC_002162.1"/>
</dbReference>
<dbReference type="SMR" id="Q9PQN5"/>
<dbReference type="STRING" id="273119.UU256"/>
<dbReference type="EnsemblBacteria" id="AAF30665">
    <property type="protein sequence ID" value="AAF30665"/>
    <property type="gene ID" value="UU256"/>
</dbReference>
<dbReference type="GeneID" id="93848731"/>
<dbReference type="KEGG" id="uur:UU256"/>
<dbReference type="eggNOG" id="COG0100">
    <property type="taxonomic scope" value="Bacteria"/>
</dbReference>
<dbReference type="HOGENOM" id="CLU_072439_5_0_14"/>
<dbReference type="OrthoDB" id="9806415at2"/>
<dbReference type="Proteomes" id="UP000000423">
    <property type="component" value="Chromosome"/>
</dbReference>
<dbReference type="GO" id="GO:1990904">
    <property type="term" value="C:ribonucleoprotein complex"/>
    <property type="evidence" value="ECO:0007669"/>
    <property type="project" value="UniProtKB-KW"/>
</dbReference>
<dbReference type="GO" id="GO:0005840">
    <property type="term" value="C:ribosome"/>
    <property type="evidence" value="ECO:0007669"/>
    <property type="project" value="UniProtKB-KW"/>
</dbReference>
<dbReference type="GO" id="GO:0019843">
    <property type="term" value="F:rRNA binding"/>
    <property type="evidence" value="ECO:0007669"/>
    <property type="project" value="UniProtKB-UniRule"/>
</dbReference>
<dbReference type="GO" id="GO:0003735">
    <property type="term" value="F:structural constituent of ribosome"/>
    <property type="evidence" value="ECO:0007669"/>
    <property type="project" value="InterPro"/>
</dbReference>
<dbReference type="GO" id="GO:0006412">
    <property type="term" value="P:translation"/>
    <property type="evidence" value="ECO:0007669"/>
    <property type="project" value="UniProtKB-UniRule"/>
</dbReference>
<dbReference type="FunFam" id="3.30.420.80:FF:000010">
    <property type="entry name" value="30S ribosomal protein S11"/>
    <property type="match status" value="1"/>
</dbReference>
<dbReference type="Gene3D" id="3.30.420.80">
    <property type="entry name" value="Ribosomal protein S11"/>
    <property type="match status" value="1"/>
</dbReference>
<dbReference type="HAMAP" id="MF_01310">
    <property type="entry name" value="Ribosomal_uS11"/>
    <property type="match status" value="1"/>
</dbReference>
<dbReference type="InterPro" id="IPR001971">
    <property type="entry name" value="Ribosomal_uS11"/>
</dbReference>
<dbReference type="InterPro" id="IPR019981">
    <property type="entry name" value="Ribosomal_uS11_bac-type"/>
</dbReference>
<dbReference type="InterPro" id="IPR018102">
    <property type="entry name" value="Ribosomal_uS11_CS"/>
</dbReference>
<dbReference type="InterPro" id="IPR036967">
    <property type="entry name" value="Ribosomal_uS11_sf"/>
</dbReference>
<dbReference type="NCBIfam" id="NF003698">
    <property type="entry name" value="PRK05309.1"/>
    <property type="match status" value="1"/>
</dbReference>
<dbReference type="NCBIfam" id="TIGR03632">
    <property type="entry name" value="uS11_bact"/>
    <property type="match status" value="1"/>
</dbReference>
<dbReference type="PANTHER" id="PTHR11759">
    <property type="entry name" value="40S RIBOSOMAL PROTEIN S14/30S RIBOSOMAL PROTEIN S11"/>
    <property type="match status" value="1"/>
</dbReference>
<dbReference type="Pfam" id="PF00411">
    <property type="entry name" value="Ribosomal_S11"/>
    <property type="match status" value="1"/>
</dbReference>
<dbReference type="PIRSF" id="PIRSF002131">
    <property type="entry name" value="Ribosomal_S11"/>
    <property type="match status" value="1"/>
</dbReference>
<dbReference type="SUPFAM" id="SSF53137">
    <property type="entry name" value="Translational machinery components"/>
    <property type="match status" value="1"/>
</dbReference>
<dbReference type="PROSITE" id="PS00054">
    <property type="entry name" value="RIBOSOMAL_S11"/>
    <property type="match status" value="1"/>
</dbReference>
<name>RS11_UREPA</name>
<gene>
    <name evidence="1" type="primary">rpsK</name>
    <name evidence="1" type="synonym">rps11</name>
    <name type="ordered locus">UU256</name>
</gene>
<feature type="chain" id="PRO_0000123252" description="Small ribosomal subunit protein uS11">
    <location>
        <begin position="1"/>
        <end position="121"/>
    </location>
</feature>
<accession>Q9PQN5</accession>
<organism>
    <name type="scientific">Ureaplasma parvum serovar 3 (strain ATCC 700970)</name>
    <dbReference type="NCBI Taxonomy" id="273119"/>
    <lineage>
        <taxon>Bacteria</taxon>
        <taxon>Bacillati</taxon>
        <taxon>Mycoplasmatota</taxon>
        <taxon>Mycoplasmoidales</taxon>
        <taxon>Mycoplasmoidaceae</taxon>
        <taxon>Ureaplasma</taxon>
    </lineage>
</organism>
<comment type="function">
    <text evidence="1">Located on the platform of the 30S subunit, it bridges several disparate RNA helices of the 16S rRNA. Forms part of the Shine-Dalgarno cleft in the 70S ribosome.</text>
</comment>
<comment type="subunit">
    <text evidence="1">Part of the 30S ribosomal subunit. Interacts with proteins S7 and S18. Binds to IF-3.</text>
</comment>
<comment type="similarity">
    <text evidence="1">Belongs to the universal ribosomal protein uS11 family.</text>
</comment>
<evidence type="ECO:0000255" key="1">
    <source>
        <dbReference type="HAMAP-Rule" id="MF_01310"/>
    </source>
</evidence>
<evidence type="ECO:0000305" key="2"/>
<reference key="1">
    <citation type="journal article" date="2000" name="Nature">
        <title>The complete sequence of the mucosal pathogen Ureaplasma urealyticum.</title>
        <authorList>
            <person name="Glass J.I."/>
            <person name="Lefkowitz E.J."/>
            <person name="Glass J.S."/>
            <person name="Heiner C.R."/>
            <person name="Chen E.Y."/>
            <person name="Cassell G.H."/>
        </authorList>
    </citation>
    <scope>NUCLEOTIDE SEQUENCE [LARGE SCALE GENOMIC DNA]</scope>
    <source>
        <strain>ATCC 700970</strain>
    </source>
</reference>